<evidence type="ECO:0000255" key="1">
    <source>
        <dbReference type="HAMAP-Rule" id="MF_01366"/>
    </source>
</evidence>
<evidence type="ECO:0000305" key="2"/>
<name>RL13_CORDI</name>
<dbReference type="EMBL" id="BX248355">
    <property type="protein sequence ID" value="CAE49073.1"/>
    <property type="molecule type" value="Genomic_DNA"/>
</dbReference>
<dbReference type="RefSeq" id="WP_004566874.1">
    <property type="nucleotide sequence ID" value="NC_002935.2"/>
</dbReference>
<dbReference type="SMR" id="Q6NJ52"/>
<dbReference type="STRING" id="257309.DIP0561"/>
<dbReference type="GeneID" id="97331169"/>
<dbReference type="KEGG" id="cdi:DIP0561"/>
<dbReference type="HOGENOM" id="CLU_082184_2_2_11"/>
<dbReference type="Proteomes" id="UP000002198">
    <property type="component" value="Chromosome"/>
</dbReference>
<dbReference type="GO" id="GO:0022625">
    <property type="term" value="C:cytosolic large ribosomal subunit"/>
    <property type="evidence" value="ECO:0007669"/>
    <property type="project" value="TreeGrafter"/>
</dbReference>
<dbReference type="GO" id="GO:0003729">
    <property type="term" value="F:mRNA binding"/>
    <property type="evidence" value="ECO:0007669"/>
    <property type="project" value="TreeGrafter"/>
</dbReference>
<dbReference type="GO" id="GO:0003735">
    <property type="term" value="F:structural constituent of ribosome"/>
    <property type="evidence" value="ECO:0007669"/>
    <property type="project" value="InterPro"/>
</dbReference>
<dbReference type="GO" id="GO:0017148">
    <property type="term" value="P:negative regulation of translation"/>
    <property type="evidence" value="ECO:0007669"/>
    <property type="project" value="TreeGrafter"/>
</dbReference>
<dbReference type="GO" id="GO:0006412">
    <property type="term" value="P:translation"/>
    <property type="evidence" value="ECO:0007669"/>
    <property type="project" value="UniProtKB-UniRule"/>
</dbReference>
<dbReference type="CDD" id="cd00392">
    <property type="entry name" value="Ribosomal_L13"/>
    <property type="match status" value="1"/>
</dbReference>
<dbReference type="Gene3D" id="3.90.1180.10">
    <property type="entry name" value="Ribosomal protein L13"/>
    <property type="match status" value="1"/>
</dbReference>
<dbReference type="HAMAP" id="MF_01366">
    <property type="entry name" value="Ribosomal_uL13"/>
    <property type="match status" value="1"/>
</dbReference>
<dbReference type="InterPro" id="IPR005822">
    <property type="entry name" value="Ribosomal_uL13"/>
</dbReference>
<dbReference type="InterPro" id="IPR005823">
    <property type="entry name" value="Ribosomal_uL13_bac-type"/>
</dbReference>
<dbReference type="InterPro" id="IPR036899">
    <property type="entry name" value="Ribosomal_uL13_sf"/>
</dbReference>
<dbReference type="NCBIfam" id="TIGR01066">
    <property type="entry name" value="rplM_bact"/>
    <property type="match status" value="1"/>
</dbReference>
<dbReference type="PANTHER" id="PTHR11545:SF2">
    <property type="entry name" value="LARGE RIBOSOMAL SUBUNIT PROTEIN UL13M"/>
    <property type="match status" value="1"/>
</dbReference>
<dbReference type="PANTHER" id="PTHR11545">
    <property type="entry name" value="RIBOSOMAL PROTEIN L13"/>
    <property type="match status" value="1"/>
</dbReference>
<dbReference type="Pfam" id="PF00572">
    <property type="entry name" value="Ribosomal_L13"/>
    <property type="match status" value="1"/>
</dbReference>
<dbReference type="PIRSF" id="PIRSF002181">
    <property type="entry name" value="Ribosomal_L13"/>
    <property type="match status" value="1"/>
</dbReference>
<dbReference type="SUPFAM" id="SSF52161">
    <property type="entry name" value="Ribosomal protein L13"/>
    <property type="match status" value="1"/>
</dbReference>
<accession>Q6NJ52</accession>
<reference key="1">
    <citation type="journal article" date="2003" name="Nucleic Acids Res.">
        <title>The complete genome sequence and analysis of Corynebacterium diphtheriae NCTC13129.</title>
        <authorList>
            <person name="Cerdeno-Tarraga A.-M."/>
            <person name="Efstratiou A."/>
            <person name="Dover L.G."/>
            <person name="Holden M.T.G."/>
            <person name="Pallen M.J."/>
            <person name="Bentley S.D."/>
            <person name="Besra G.S."/>
            <person name="Churcher C.M."/>
            <person name="James K.D."/>
            <person name="De Zoysa A."/>
            <person name="Chillingworth T."/>
            <person name="Cronin A."/>
            <person name="Dowd L."/>
            <person name="Feltwell T."/>
            <person name="Hamlin N."/>
            <person name="Holroyd S."/>
            <person name="Jagels K."/>
            <person name="Moule S."/>
            <person name="Quail M.A."/>
            <person name="Rabbinowitsch E."/>
            <person name="Rutherford K.M."/>
            <person name="Thomson N.R."/>
            <person name="Unwin L."/>
            <person name="Whitehead S."/>
            <person name="Barrell B.G."/>
            <person name="Parkhill J."/>
        </authorList>
    </citation>
    <scope>NUCLEOTIDE SEQUENCE [LARGE SCALE GENOMIC DNA]</scope>
    <source>
        <strain>ATCC 700971 / NCTC 13129 / Biotype gravis</strain>
    </source>
</reference>
<feature type="chain" id="PRO_1000055370" description="Large ribosomal subunit protein uL13">
    <location>
        <begin position="1"/>
        <end position="147"/>
    </location>
</feature>
<protein>
    <recommendedName>
        <fullName evidence="1">Large ribosomal subunit protein uL13</fullName>
    </recommendedName>
    <alternativeName>
        <fullName evidence="2">50S ribosomal protein L13</fullName>
    </alternativeName>
</protein>
<proteinExistence type="inferred from homology"/>
<sequence length="147" mass="16576">MSTYHPKSGDITRKWYVIDATDVVLGRLATHAADLLRGKGKPQFAPNVDCGDHVIVINADKVHVSSNKREREMRYRHSGYPGGLKTMTLGRSLEVHPERVVEESIRGMMPHNRLSRASVKKLHVFAGSEHPYAAQKPETYEFKQVAQ</sequence>
<gene>
    <name evidence="1" type="primary">rplM</name>
    <name type="ordered locus">DIP0561</name>
</gene>
<keyword id="KW-1185">Reference proteome</keyword>
<keyword id="KW-0687">Ribonucleoprotein</keyword>
<keyword id="KW-0689">Ribosomal protein</keyword>
<comment type="function">
    <text evidence="1">This protein is one of the early assembly proteins of the 50S ribosomal subunit, although it is not seen to bind rRNA by itself. It is important during the early stages of 50S assembly.</text>
</comment>
<comment type="subunit">
    <text evidence="1">Part of the 50S ribosomal subunit.</text>
</comment>
<comment type="similarity">
    <text evidence="1">Belongs to the universal ribosomal protein uL13 family.</text>
</comment>
<organism>
    <name type="scientific">Corynebacterium diphtheriae (strain ATCC 700971 / NCTC 13129 / Biotype gravis)</name>
    <dbReference type="NCBI Taxonomy" id="257309"/>
    <lineage>
        <taxon>Bacteria</taxon>
        <taxon>Bacillati</taxon>
        <taxon>Actinomycetota</taxon>
        <taxon>Actinomycetes</taxon>
        <taxon>Mycobacteriales</taxon>
        <taxon>Corynebacteriaceae</taxon>
        <taxon>Corynebacterium</taxon>
    </lineage>
</organism>